<gene>
    <name evidence="1" type="primary">lipA</name>
    <name type="ordered locus">PST_3774</name>
</gene>
<evidence type="ECO:0000255" key="1">
    <source>
        <dbReference type="HAMAP-Rule" id="MF_00206"/>
    </source>
</evidence>
<evidence type="ECO:0000255" key="2">
    <source>
        <dbReference type="PROSITE-ProRule" id="PRU01266"/>
    </source>
</evidence>
<protein>
    <recommendedName>
        <fullName evidence="1">Lipoyl synthase</fullName>
        <ecNumber evidence="1">2.8.1.8</ecNumber>
    </recommendedName>
    <alternativeName>
        <fullName evidence="1">Lip-syn</fullName>
        <shortName evidence="1">LS</shortName>
    </alternativeName>
    <alternativeName>
        <fullName evidence="1">Lipoate synthase</fullName>
    </alternativeName>
    <alternativeName>
        <fullName evidence="1">Lipoic acid synthase</fullName>
    </alternativeName>
    <alternativeName>
        <fullName evidence="1">Sulfur insertion protein LipA</fullName>
    </alternativeName>
</protein>
<sequence>MSSVETAGKRPAKVEAGVKLRGAEKVARIPVKIIPTDELPKKPDWIRVRIPVSPEVDQIKQTLRKHKLHSVCEEASCPNLGECFSSGTATFMIMGDICTRRCPFCDVGHGRPNALDPDEPKNLAQAIADMRLKYVVITSVDRDDLRDGGAQHFADCLREIRKLSPSIQLETLVPDYRGRMEIALDITATEPPDVFNHNLETVPRLYKSSRPGSDFEWSLDLLEKFKQRVPGVPTKSGLMLGLGETDEEVIEVMQRMREHDIDMLTLGQYLQPSRNHLPVQRFVHPDTFAWFAEEGMKMGFKNVASGPLVRSSYHADQQAHGAKHD</sequence>
<comment type="function">
    <text evidence="1">Catalyzes the radical-mediated insertion of two sulfur atoms into the C-6 and C-8 positions of the octanoyl moiety bound to the lipoyl domains of lipoate-dependent enzymes, thereby converting the octanoylated domains into lipoylated derivatives.</text>
</comment>
<comment type="catalytic activity">
    <reaction evidence="1">
        <text>[[Fe-S] cluster scaffold protein carrying a second [4Fe-4S](2+) cluster] + N(6)-octanoyl-L-lysyl-[protein] + 2 oxidized [2Fe-2S]-[ferredoxin] + 2 S-adenosyl-L-methionine + 4 H(+) = [[Fe-S] cluster scaffold protein] + N(6)-[(R)-dihydrolipoyl]-L-lysyl-[protein] + 4 Fe(3+) + 2 hydrogen sulfide + 2 5'-deoxyadenosine + 2 L-methionine + 2 reduced [2Fe-2S]-[ferredoxin]</text>
        <dbReference type="Rhea" id="RHEA:16585"/>
        <dbReference type="Rhea" id="RHEA-COMP:9928"/>
        <dbReference type="Rhea" id="RHEA-COMP:10000"/>
        <dbReference type="Rhea" id="RHEA-COMP:10001"/>
        <dbReference type="Rhea" id="RHEA-COMP:10475"/>
        <dbReference type="Rhea" id="RHEA-COMP:14568"/>
        <dbReference type="Rhea" id="RHEA-COMP:14569"/>
        <dbReference type="ChEBI" id="CHEBI:15378"/>
        <dbReference type="ChEBI" id="CHEBI:17319"/>
        <dbReference type="ChEBI" id="CHEBI:29034"/>
        <dbReference type="ChEBI" id="CHEBI:29919"/>
        <dbReference type="ChEBI" id="CHEBI:33722"/>
        <dbReference type="ChEBI" id="CHEBI:33737"/>
        <dbReference type="ChEBI" id="CHEBI:33738"/>
        <dbReference type="ChEBI" id="CHEBI:57844"/>
        <dbReference type="ChEBI" id="CHEBI:59789"/>
        <dbReference type="ChEBI" id="CHEBI:78809"/>
        <dbReference type="ChEBI" id="CHEBI:83100"/>
        <dbReference type="EC" id="2.8.1.8"/>
    </reaction>
</comment>
<comment type="cofactor">
    <cofactor evidence="1">
        <name>[4Fe-4S] cluster</name>
        <dbReference type="ChEBI" id="CHEBI:49883"/>
    </cofactor>
    <text evidence="1">Binds 2 [4Fe-4S] clusters per subunit. One cluster is coordinated with 3 cysteines and an exchangeable S-adenosyl-L-methionine.</text>
</comment>
<comment type="pathway">
    <text evidence="1">Protein modification; protein lipoylation via endogenous pathway; protein N(6)-(lipoyl)lysine from octanoyl-[acyl-carrier-protein]: step 2/2.</text>
</comment>
<comment type="subcellular location">
    <subcellularLocation>
        <location evidence="1">Cytoplasm</location>
    </subcellularLocation>
</comment>
<comment type="similarity">
    <text evidence="1">Belongs to the radical SAM superfamily. Lipoyl synthase family.</text>
</comment>
<accession>A4VQZ6</accession>
<dbReference type="EC" id="2.8.1.8" evidence="1"/>
<dbReference type="EMBL" id="CP000304">
    <property type="protein sequence ID" value="ABP81397.1"/>
    <property type="molecule type" value="Genomic_DNA"/>
</dbReference>
<dbReference type="RefSeq" id="WP_011914782.1">
    <property type="nucleotide sequence ID" value="NC_009434.1"/>
</dbReference>
<dbReference type="SMR" id="A4VQZ6"/>
<dbReference type="KEGG" id="psa:PST_3774"/>
<dbReference type="eggNOG" id="COG0320">
    <property type="taxonomic scope" value="Bacteria"/>
</dbReference>
<dbReference type="HOGENOM" id="CLU_033144_2_1_6"/>
<dbReference type="UniPathway" id="UPA00538">
    <property type="reaction ID" value="UER00593"/>
</dbReference>
<dbReference type="Proteomes" id="UP000000233">
    <property type="component" value="Chromosome"/>
</dbReference>
<dbReference type="GO" id="GO:0005737">
    <property type="term" value="C:cytoplasm"/>
    <property type="evidence" value="ECO:0007669"/>
    <property type="project" value="UniProtKB-SubCell"/>
</dbReference>
<dbReference type="GO" id="GO:0051539">
    <property type="term" value="F:4 iron, 4 sulfur cluster binding"/>
    <property type="evidence" value="ECO:0007669"/>
    <property type="project" value="UniProtKB-UniRule"/>
</dbReference>
<dbReference type="GO" id="GO:0016992">
    <property type="term" value="F:lipoate synthase activity"/>
    <property type="evidence" value="ECO:0007669"/>
    <property type="project" value="UniProtKB-UniRule"/>
</dbReference>
<dbReference type="GO" id="GO:0046872">
    <property type="term" value="F:metal ion binding"/>
    <property type="evidence" value="ECO:0007669"/>
    <property type="project" value="UniProtKB-KW"/>
</dbReference>
<dbReference type="CDD" id="cd01335">
    <property type="entry name" value="Radical_SAM"/>
    <property type="match status" value="1"/>
</dbReference>
<dbReference type="FunFam" id="3.20.20.70:FF:000023">
    <property type="entry name" value="Lipoyl synthase"/>
    <property type="match status" value="1"/>
</dbReference>
<dbReference type="Gene3D" id="3.20.20.70">
    <property type="entry name" value="Aldolase class I"/>
    <property type="match status" value="1"/>
</dbReference>
<dbReference type="HAMAP" id="MF_00206">
    <property type="entry name" value="Lipoyl_synth"/>
    <property type="match status" value="1"/>
</dbReference>
<dbReference type="InterPro" id="IPR013785">
    <property type="entry name" value="Aldolase_TIM"/>
</dbReference>
<dbReference type="InterPro" id="IPR006638">
    <property type="entry name" value="Elp3/MiaA/NifB-like_rSAM"/>
</dbReference>
<dbReference type="InterPro" id="IPR031691">
    <property type="entry name" value="LIAS_N"/>
</dbReference>
<dbReference type="InterPro" id="IPR003698">
    <property type="entry name" value="Lipoyl_synth"/>
</dbReference>
<dbReference type="InterPro" id="IPR007197">
    <property type="entry name" value="rSAM"/>
</dbReference>
<dbReference type="NCBIfam" id="TIGR00510">
    <property type="entry name" value="lipA"/>
    <property type="match status" value="1"/>
</dbReference>
<dbReference type="NCBIfam" id="NF004019">
    <property type="entry name" value="PRK05481.1"/>
    <property type="match status" value="1"/>
</dbReference>
<dbReference type="NCBIfam" id="NF009544">
    <property type="entry name" value="PRK12928.1"/>
    <property type="match status" value="1"/>
</dbReference>
<dbReference type="PANTHER" id="PTHR10949">
    <property type="entry name" value="LIPOYL SYNTHASE"/>
    <property type="match status" value="1"/>
</dbReference>
<dbReference type="PANTHER" id="PTHR10949:SF0">
    <property type="entry name" value="LIPOYL SYNTHASE, MITOCHONDRIAL"/>
    <property type="match status" value="1"/>
</dbReference>
<dbReference type="Pfam" id="PF16881">
    <property type="entry name" value="LIAS_N"/>
    <property type="match status" value="1"/>
</dbReference>
<dbReference type="Pfam" id="PF04055">
    <property type="entry name" value="Radical_SAM"/>
    <property type="match status" value="1"/>
</dbReference>
<dbReference type="PIRSF" id="PIRSF005963">
    <property type="entry name" value="Lipoyl_synth"/>
    <property type="match status" value="1"/>
</dbReference>
<dbReference type="SFLD" id="SFLDF00271">
    <property type="entry name" value="lipoyl_synthase"/>
    <property type="match status" value="1"/>
</dbReference>
<dbReference type="SFLD" id="SFLDS00029">
    <property type="entry name" value="Radical_SAM"/>
    <property type="match status" value="1"/>
</dbReference>
<dbReference type="SMART" id="SM00729">
    <property type="entry name" value="Elp3"/>
    <property type="match status" value="1"/>
</dbReference>
<dbReference type="SUPFAM" id="SSF102114">
    <property type="entry name" value="Radical SAM enzymes"/>
    <property type="match status" value="1"/>
</dbReference>
<dbReference type="PROSITE" id="PS51918">
    <property type="entry name" value="RADICAL_SAM"/>
    <property type="match status" value="1"/>
</dbReference>
<reference key="1">
    <citation type="journal article" date="2008" name="Proc. Natl. Acad. Sci. U.S.A.">
        <title>Nitrogen fixation island and rhizosphere competence traits in the genome of root-associated Pseudomonas stutzeri A1501.</title>
        <authorList>
            <person name="Yan Y."/>
            <person name="Yang J."/>
            <person name="Dou Y."/>
            <person name="Chen M."/>
            <person name="Ping S."/>
            <person name="Peng J."/>
            <person name="Lu W."/>
            <person name="Zhang W."/>
            <person name="Yao Z."/>
            <person name="Li H."/>
            <person name="Liu W."/>
            <person name="He S."/>
            <person name="Geng L."/>
            <person name="Zhang X."/>
            <person name="Yang F."/>
            <person name="Yu H."/>
            <person name="Zhan Y."/>
            <person name="Li D."/>
            <person name="Lin Z."/>
            <person name="Wang Y."/>
            <person name="Elmerich C."/>
            <person name="Lin M."/>
            <person name="Jin Q."/>
        </authorList>
    </citation>
    <scope>NUCLEOTIDE SEQUENCE [LARGE SCALE GENOMIC DNA]</scope>
    <source>
        <strain>A1501</strain>
    </source>
</reference>
<organism>
    <name type="scientific">Stutzerimonas stutzeri (strain A1501)</name>
    <name type="common">Pseudomonas stutzeri</name>
    <dbReference type="NCBI Taxonomy" id="379731"/>
    <lineage>
        <taxon>Bacteria</taxon>
        <taxon>Pseudomonadati</taxon>
        <taxon>Pseudomonadota</taxon>
        <taxon>Gammaproteobacteria</taxon>
        <taxon>Pseudomonadales</taxon>
        <taxon>Pseudomonadaceae</taxon>
        <taxon>Stutzerimonas</taxon>
    </lineage>
</organism>
<name>LIPA_STUS1</name>
<keyword id="KW-0004">4Fe-4S</keyword>
<keyword id="KW-0963">Cytoplasm</keyword>
<keyword id="KW-0408">Iron</keyword>
<keyword id="KW-0411">Iron-sulfur</keyword>
<keyword id="KW-0479">Metal-binding</keyword>
<keyword id="KW-1185">Reference proteome</keyword>
<keyword id="KW-0949">S-adenosyl-L-methionine</keyword>
<keyword id="KW-0808">Transferase</keyword>
<proteinExistence type="inferred from homology"/>
<feature type="chain" id="PRO_0000325291" description="Lipoyl synthase">
    <location>
        <begin position="1"/>
        <end position="325"/>
    </location>
</feature>
<feature type="domain" description="Radical SAM core" evidence="2">
    <location>
        <begin position="84"/>
        <end position="301"/>
    </location>
</feature>
<feature type="binding site" evidence="1">
    <location>
        <position position="72"/>
    </location>
    <ligand>
        <name>[4Fe-4S] cluster</name>
        <dbReference type="ChEBI" id="CHEBI:49883"/>
        <label>1</label>
    </ligand>
</feature>
<feature type="binding site" evidence="1">
    <location>
        <position position="77"/>
    </location>
    <ligand>
        <name>[4Fe-4S] cluster</name>
        <dbReference type="ChEBI" id="CHEBI:49883"/>
        <label>1</label>
    </ligand>
</feature>
<feature type="binding site" evidence="1">
    <location>
        <position position="83"/>
    </location>
    <ligand>
        <name>[4Fe-4S] cluster</name>
        <dbReference type="ChEBI" id="CHEBI:49883"/>
        <label>1</label>
    </ligand>
</feature>
<feature type="binding site" evidence="1">
    <location>
        <position position="98"/>
    </location>
    <ligand>
        <name>[4Fe-4S] cluster</name>
        <dbReference type="ChEBI" id="CHEBI:49883"/>
        <label>2</label>
        <note>4Fe-4S-S-AdoMet</note>
    </ligand>
</feature>
<feature type="binding site" evidence="1">
    <location>
        <position position="102"/>
    </location>
    <ligand>
        <name>[4Fe-4S] cluster</name>
        <dbReference type="ChEBI" id="CHEBI:49883"/>
        <label>2</label>
        <note>4Fe-4S-S-AdoMet</note>
    </ligand>
</feature>
<feature type="binding site" evidence="1">
    <location>
        <position position="105"/>
    </location>
    <ligand>
        <name>[4Fe-4S] cluster</name>
        <dbReference type="ChEBI" id="CHEBI:49883"/>
        <label>2</label>
        <note>4Fe-4S-S-AdoMet</note>
    </ligand>
</feature>
<feature type="binding site" evidence="1">
    <location>
        <position position="312"/>
    </location>
    <ligand>
        <name>[4Fe-4S] cluster</name>
        <dbReference type="ChEBI" id="CHEBI:49883"/>
        <label>1</label>
    </ligand>
</feature>